<reference key="1">
    <citation type="journal article" date="2001" name="J. Bacteriol.">
        <title>Genome sequence and comparative analysis of the solvent-producing bacterium Clostridium acetobutylicum.</title>
        <authorList>
            <person name="Noelling J."/>
            <person name="Breton G."/>
            <person name="Omelchenko M.V."/>
            <person name="Makarova K.S."/>
            <person name="Zeng Q."/>
            <person name="Gibson R."/>
            <person name="Lee H.M."/>
            <person name="Dubois J."/>
            <person name="Qiu D."/>
            <person name="Hitti J."/>
            <person name="Wolf Y.I."/>
            <person name="Tatusov R.L."/>
            <person name="Sabathe F."/>
            <person name="Doucette-Stamm L.A."/>
            <person name="Soucaille P."/>
            <person name="Daly M.J."/>
            <person name="Bennett G.N."/>
            <person name="Koonin E.V."/>
            <person name="Smith D.R."/>
        </authorList>
    </citation>
    <scope>NUCLEOTIDE SEQUENCE [LARGE SCALE GENOMIC DNA]</scope>
    <source>
        <strain>ATCC 824 / DSM 792 / JCM 1419 / IAM 19013 / LMG 5710 / NBRC 13948 / NRRL B-527 / VKM B-1787 / 2291 / W</strain>
    </source>
</reference>
<keyword id="KW-0963">Cytoplasm</keyword>
<keyword id="KW-0648">Protein biosynthesis</keyword>
<keyword id="KW-1185">Reference proteome</keyword>
<sequence>MISDIIKELEEKMTKSISALKKELTSMKAGRANPAMLDRIEVDYYGTMTPLNQLANISVPESRVLMIQPWDKSAMKSIEKAILISDLGLNPSNDGTTMRLVIPELTEETRKNIVKNVKKAGEDGKVALRAIRRDANDKVKSLKKDNSITEDEMKSAENDIQKKTDSYVKEIDKMVEAKEKEIMSI</sequence>
<protein>
    <recommendedName>
        <fullName evidence="1">Ribosome-recycling factor</fullName>
        <shortName evidence="1">RRF</shortName>
    </recommendedName>
    <alternativeName>
        <fullName evidence="1">Ribosome-releasing factor</fullName>
    </alternativeName>
</protein>
<name>RRF_CLOAB</name>
<gene>
    <name evidence="1" type="primary">frr</name>
    <name type="ordered locus">CA_C1790</name>
</gene>
<accession>Q97I63</accession>
<comment type="function">
    <text evidence="1">Responsible for the release of ribosomes from messenger RNA at the termination of protein biosynthesis. May increase the efficiency of translation by recycling ribosomes from one round of translation to another.</text>
</comment>
<comment type="subcellular location">
    <subcellularLocation>
        <location evidence="1">Cytoplasm</location>
    </subcellularLocation>
</comment>
<comment type="similarity">
    <text evidence="1">Belongs to the RRF family.</text>
</comment>
<dbReference type="EMBL" id="AE001437">
    <property type="protein sequence ID" value="AAK79755.1"/>
    <property type="molecule type" value="Genomic_DNA"/>
</dbReference>
<dbReference type="PIR" id="H97120">
    <property type="entry name" value="H97120"/>
</dbReference>
<dbReference type="RefSeq" id="NP_348415.1">
    <property type="nucleotide sequence ID" value="NC_003030.1"/>
</dbReference>
<dbReference type="RefSeq" id="WP_010965096.1">
    <property type="nucleotide sequence ID" value="NC_003030.1"/>
</dbReference>
<dbReference type="SMR" id="Q97I63"/>
<dbReference type="STRING" id="272562.CA_C1790"/>
<dbReference type="GeneID" id="44998284"/>
<dbReference type="KEGG" id="cac:CA_C1790"/>
<dbReference type="PATRIC" id="fig|272562.8.peg.1996"/>
<dbReference type="eggNOG" id="COG0233">
    <property type="taxonomic scope" value="Bacteria"/>
</dbReference>
<dbReference type="HOGENOM" id="CLU_073981_2_0_9"/>
<dbReference type="OrthoDB" id="9804006at2"/>
<dbReference type="Proteomes" id="UP000000814">
    <property type="component" value="Chromosome"/>
</dbReference>
<dbReference type="GO" id="GO:0005737">
    <property type="term" value="C:cytoplasm"/>
    <property type="evidence" value="ECO:0007669"/>
    <property type="project" value="UniProtKB-SubCell"/>
</dbReference>
<dbReference type="GO" id="GO:0043023">
    <property type="term" value="F:ribosomal large subunit binding"/>
    <property type="evidence" value="ECO:0007669"/>
    <property type="project" value="TreeGrafter"/>
</dbReference>
<dbReference type="GO" id="GO:0006415">
    <property type="term" value="P:translational termination"/>
    <property type="evidence" value="ECO:0007669"/>
    <property type="project" value="UniProtKB-UniRule"/>
</dbReference>
<dbReference type="CDD" id="cd00520">
    <property type="entry name" value="RRF"/>
    <property type="match status" value="1"/>
</dbReference>
<dbReference type="FunFam" id="1.10.132.20:FF:000001">
    <property type="entry name" value="Ribosome-recycling factor"/>
    <property type="match status" value="1"/>
</dbReference>
<dbReference type="FunFam" id="3.30.1360.40:FF:000001">
    <property type="entry name" value="Ribosome-recycling factor"/>
    <property type="match status" value="1"/>
</dbReference>
<dbReference type="Gene3D" id="3.30.1360.40">
    <property type="match status" value="1"/>
</dbReference>
<dbReference type="Gene3D" id="1.10.132.20">
    <property type="entry name" value="Ribosome-recycling factor"/>
    <property type="match status" value="1"/>
</dbReference>
<dbReference type="HAMAP" id="MF_00040">
    <property type="entry name" value="RRF"/>
    <property type="match status" value="1"/>
</dbReference>
<dbReference type="InterPro" id="IPR002661">
    <property type="entry name" value="Ribosome_recyc_fac"/>
</dbReference>
<dbReference type="InterPro" id="IPR023584">
    <property type="entry name" value="Ribosome_recyc_fac_dom"/>
</dbReference>
<dbReference type="InterPro" id="IPR036191">
    <property type="entry name" value="RRF_sf"/>
</dbReference>
<dbReference type="NCBIfam" id="TIGR00496">
    <property type="entry name" value="frr"/>
    <property type="match status" value="1"/>
</dbReference>
<dbReference type="PANTHER" id="PTHR20982:SF3">
    <property type="entry name" value="MITOCHONDRIAL RIBOSOME RECYCLING FACTOR PSEUDO 1"/>
    <property type="match status" value="1"/>
</dbReference>
<dbReference type="PANTHER" id="PTHR20982">
    <property type="entry name" value="RIBOSOME RECYCLING FACTOR"/>
    <property type="match status" value="1"/>
</dbReference>
<dbReference type="Pfam" id="PF01765">
    <property type="entry name" value="RRF"/>
    <property type="match status" value="1"/>
</dbReference>
<dbReference type="SUPFAM" id="SSF55194">
    <property type="entry name" value="Ribosome recycling factor, RRF"/>
    <property type="match status" value="1"/>
</dbReference>
<evidence type="ECO:0000255" key="1">
    <source>
        <dbReference type="HAMAP-Rule" id="MF_00040"/>
    </source>
</evidence>
<organism>
    <name type="scientific">Clostridium acetobutylicum (strain ATCC 824 / DSM 792 / JCM 1419 / IAM 19013 / LMG 5710 / NBRC 13948 / NRRL B-527 / VKM B-1787 / 2291 / W)</name>
    <dbReference type="NCBI Taxonomy" id="272562"/>
    <lineage>
        <taxon>Bacteria</taxon>
        <taxon>Bacillati</taxon>
        <taxon>Bacillota</taxon>
        <taxon>Clostridia</taxon>
        <taxon>Eubacteriales</taxon>
        <taxon>Clostridiaceae</taxon>
        <taxon>Clostridium</taxon>
    </lineage>
</organism>
<proteinExistence type="inferred from homology"/>
<feature type="chain" id="PRO_0000167444" description="Ribosome-recycling factor">
    <location>
        <begin position="1"/>
        <end position="185"/>
    </location>
</feature>